<gene>
    <name evidence="1" type="primary">petN</name>
</gene>
<keyword id="KW-0002">3D-structure</keyword>
<keyword id="KW-0249">Electron transport</keyword>
<keyword id="KW-0472">Membrane</keyword>
<keyword id="KW-0602">Photosynthesis</keyword>
<keyword id="KW-0793">Thylakoid</keyword>
<keyword id="KW-0812">Transmembrane</keyword>
<keyword id="KW-1133">Transmembrane helix</keyword>
<keyword id="KW-0813">Transport</keyword>
<comment type="function">
    <text evidence="3">Component of the cytochrome b6-f complex, which mediates electron transfer between photosystem II (PSII) and photosystem I (PSI), cyclic electron flow around PSI, and state transitions.</text>
</comment>
<comment type="subunit">
    <text evidence="2">The 4 large subunits of the cytochrome b6-f complex are cytochrome b6, subunit IV (17 kDa polypeptide, PetD), cytochrome f and the Rieske protein, while the 4 small subunits are PetG, PetL, PetM and PetN. The complex functions as a dimer.</text>
</comment>
<comment type="subcellular location">
    <subcellularLocation>
        <location evidence="3">Cellular thylakoid membrane</location>
        <topology evidence="2">Single-pass membrane protein</topology>
    </subcellularLocation>
</comment>
<comment type="similarity">
    <text evidence="1">Belongs to the PetN family.</text>
</comment>
<sequence length="29" mass="3276">MEIDVLGWVALLVVFTWSIAMVVWGRNGL</sequence>
<feature type="chain" id="PRO_0000217137" description="Cytochrome b6-f complex subunit 8">
    <location>
        <begin position="1"/>
        <end position="29"/>
    </location>
</feature>
<feature type="transmembrane region" description="Helical" evidence="1 3">
    <location>
        <begin position="3"/>
        <end position="23"/>
    </location>
</feature>
<feature type="helix" evidence="4">
    <location>
        <begin position="3"/>
        <end position="26"/>
    </location>
</feature>
<reference key="1">
    <citation type="journal article" date="2003" name="Science">
        <title>Structure of the cytochrome b6f complex of oxygenic photosynthesis: tuning the cavity.</title>
        <authorList>
            <person name="Kurisu G."/>
            <person name="Zhang H."/>
            <person name="Smith J.L."/>
            <person name="Cramer W.A."/>
        </authorList>
    </citation>
    <scope>X-RAY CRYSTALLOGRAPHY (3.0 ANGSTROMS) IN CYTOCHROME B6-F COMPLEX</scope>
    <scope>FUNCTION</scope>
    <scope>SUBUNIT</scope>
    <scope>SUBCELLULAR LOCATION</scope>
</reference>
<name>PETN_MASLA</name>
<protein>
    <recommendedName>
        <fullName evidence="1">Cytochrome b6-f complex subunit 8</fullName>
    </recommendedName>
    <alternativeName>
        <fullName evidence="1">Cytochrome b6-f complex subunit PetN</fullName>
    </alternativeName>
    <alternativeName>
        <fullName evidence="1">Cytochrome b6-f complex subunit VIII</fullName>
    </alternativeName>
</protein>
<dbReference type="PDB" id="1VF5">
    <property type="method" value="X-ray"/>
    <property type="resolution" value="3.00 A"/>
    <property type="chains" value="H/U=1-29"/>
</dbReference>
<dbReference type="PDB" id="2D2C">
    <property type="method" value="X-ray"/>
    <property type="resolution" value="3.80 A"/>
    <property type="chains" value="H/U=1-29"/>
</dbReference>
<dbReference type="PDB" id="2E74">
    <property type="method" value="X-ray"/>
    <property type="resolution" value="3.00 A"/>
    <property type="chains" value="H=1-29"/>
</dbReference>
<dbReference type="PDB" id="2E75">
    <property type="method" value="X-ray"/>
    <property type="resolution" value="3.55 A"/>
    <property type="chains" value="H=1-29"/>
</dbReference>
<dbReference type="PDB" id="2E76">
    <property type="method" value="X-ray"/>
    <property type="resolution" value="3.41 A"/>
    <property type="chains" value="H=1-29"/>
</dbReference>
<dbReference type="PDB" id="4H0L">
    <property type="method" value="X-ray"/>
    <property type="resolution" value="3.25 A"/>
    <property type="chains" value="H=1-29"/>
</dbReference>
<dbReference type="PDB" id="4H13">
    <property type="method" value="X-ray"/>
    <property type="resolution" value="3.07 A"/>
    <property type="chains" value="H=1-29"/>
</dbReference>
<dbReference type="PDB" id="4I7Z">
    <property type="method" value="X-ray"/>
    <property type="resolution" value="2.80 A"/>
    <property type="chains" value="H=1-29"/>
</dbReference>
<dbReference type="PDB" id="4PV1">
    <property type="method" value="X-ray"/>
    <property type="resolution" value="3.00 A"/>
    <property type="chains" value="H=1-29"/>
</dbReference>
<dbReference type="PDBsum" id="1VF5"/>
<dbReference type="PDBsum" id="2D2C"/>
<dbReference type="PDBsum" id="2E74"/>
<dbReference type="PDBsum" id="2E75"/>
<dbReference type="PDBsum" id="2E76"/>
<dbReference type="PDBsum" id="4H0L"/>
<dbReference type="PDBsum" id="4H13"/>
<dbReference type="PDBsum" id="4I7Z"/>
<dbReference type="PDBsum" id="4PV1"/>
<dbReference type="SMR" id="P83798"/>
<dbReference type="DrugBank" id="DB08453">
    <property type="generic name" value="2-Nonyl-4-quinolinol 1-oxide"/>
</dbReference>
<dbReference type="DrugBank" id="DB04646">
    <property type="generic name" value="Dibromothymoquinone"/>
</dbReference>
<dbReference type="EvolutionaryTrace" id="P83798"/>
<dbReference type="GO" id="GO:0009512">
    <property type="term" value="C:cytochrome b6f complex"/>
    <property type="evidence" value="ECO:0000314"/>
    <property type="project" value="CACAO"/>
</dbReference>
<dbReference type="GO" id="GO:0031676">
    <property type="term" value="C:plasma membrane-derived thylakoid membrane"/>
    <property type="evidence" value="ECO:0007669"/>
    <property type="project" value="UniProtKB-SubCell"/>
</dbReference>
<dbReference type="GO" id="GO:0045158">
    <property type="term" value="F:electron transporter, transferring electrons within cytochrome b6/f complex of photosystem II activity"/>
    <property type="evidence" value="ECO:0007669"/>
    <property type="project" value="InterPro"/>
</dbReference>
<dbReference type="GO" id="GO:0017004">
    <property type="term" value="P:cytochrome complex assembly"/>
    <property type="evidence" value="ECO:0007669"/>
    <property type="project" value="UniProtKB-UniRule"/>
</dbReference>
<dbReference type="GO" id="GO:0015979">
    <property type="term" value="P:photosynthesis"/>
    <property type="evidence" value="ECO:0007669"/>
    <property type="project" value="UniProtKB-KW"/>
</dbReference>
<dbReference type="HAMAP" id="MF_00395">
    <property type="entry name" value="Cytb6_f_PetN"/>
    <property type="match status" value="1"/>
</dbReference>
<dbReference type="InterPro" id="IPR036143">
    <property type="entry name" value="Cytochr_b6-f_cplx_su8_sf"/>
</dbReference>
<dbReference type="InterPro" id="IPR005497">
    <property type="entry name" value="Cytochrome_b6-f_cplx_su8"/>
</dbReference>
<dbReference type="NCBIfam" id="NF011331">
    <property type="entry name" value="PRK14747.1"/>
    <property type="match status" value="1"/>
</dbReference>
<dbReference type="Pfam" id="PF03742">
    <property type="entry name" value="PetN"/>
    <property type="match status" value="1"/>
</dbReference>
<dbReference type="SUPFAM" id="SSF103451">
    <property type="entry name" value="PetN subunit of the cytochrome b6f complex"/>
    <property type="match status" value="1"/>
</dbReference>
<organism>
    <name type="scientific">Mastigocladus laminosus</name>
    <name type="common">Fischerella sp.</name>
    <dbReference type="NCBI Taxonomy" id="83541"/>
    <lineage>
        <taxon>Bacteria</taxon>
        <taxon>Bacillati</taxon>
        <taxon>Cyanobacteriota</taxon>
        <taxon>Cyanophyceae</taxon>
        <taxon>Nostocales</taxon>
        <taxon>Hapalosiphonaceae</taxon>
        <taxon>Mastigocladus</taxon>
    </lineage>
</organism>
<proteinExistence type="evidence at protein level"/>
<accession>P83798</accession>
<evidence type="ECO:0000255" key="1">
    <source>
        <dbReference type="HAMAP-Rule" id="MF_00395"/>
    </source>
</evidence>
<evidence type="ECO:0000269" key="2">
    <source>
    </source>
</evidence>
<evidence type="ECO:0000305" key="3">
    <source>
    </source>
</evidence>
<evidence type="ECO:0007829" key="4">
    <source>
        <dbReference type="PDB" id="4I7Z"/>
    </source>
</evidence>